<protein>
    <recommendedName>
        <fullName>DNA polymerase III subunit alpha</fullName>
        <ecNumber>2.7.7.7</ecNumber>
    </recommendedName>
</protein>
<feature type="chain" id="PRO_0000103347" description="DNA polymerase III subunit alpha">
    <location>
        <begin position="1"/>
        <end position="1065"/>
    </location>
</feature>
<dbReference type="EC" id="2.7.7.7"/>
<dbReference type="EMBL" id="CP000029">
    <property type="protein sequence ID" value="AAW54654.1"/>
    <property type="molecule type" value="Genomic_DNA"/>
</dbReference>
<dbReference type="RefSeq" id="WP_010959192.1">
    <property type="nucleotide sequence ID" value="NC_002976.3"/>
</dbReference>
<dbReference type="SMR" id="Q5HNK2"/>
<dbReference type="STRING" id="176279.SERP1266"/>
<dbReference type="KEGG" id="ser:SERP1266"/>
<dbReference type="eggNOG" id="COG0587">
    <property type="taxonomic scope" value="Bacteria"/>
</dbReference>
<dbReference type="HOGENOM" id="CLU_001600_0_0_9"/>
<dbReference type="Proteomes" id="UP000000531">
    <property type="component" value="Chromosome"/>
</dbReference>
<dbReference type="GO" id="GO:0005737">
    <property type="term" value="C:cytoplasm"/>
    <property type="evidence" value="ECO:0007669"/>
    <property type="project" value="UniProtKB-SubCell"/>
</dbReference>
<dbReference type="GO" id="GO:0008408">
    <property type="term" value="F:3'-5' exonuclease activity"/>
    <property type="evidence" value="ECO:0007669"/>
    <property type="project" value="InterPro"/>
</dbReference>
<dbReference type="GO" id="GO:0003887">
    <property type="term" value="F:DNA-directed DNA polymerase activity"/>
    <property type="evidence" value="ECO:0007669"/>
    <property type="project" value="UniProtKB-KW"/>
</dbReference>
<dbReference type="GO" id="GO:0003676">
    <property type="term" value="F:nucleic acid binding"/>
    <property type="evidence" value="ECO:0007669"/>
    <property type="project" value="InterPro"/>
</dbReference>
<dbReference type="GO" id="GO:0006260">
    <property type="term" value="P:DNA replication"/>
    <property type="evidence" value="ECO:0007669"/>
    <property type="project" value="UniProtKB-KW"/>
</dbReference>
<dbReference type="CDD" id="cd04485">
    <property type="entry name" value="DnaE_OBF"/>
    <property type="match status" value="1"/>
</dbReference>
<dbReference type="CDD" id="cd07431">
    <property type="entry name" value="PHP_PolIIIA"/>
    <property type="match status" value="1"/>
</dbReference>
<dbReference type="Gene3D" id="1.10.150.870">
    <property type="match status" value="1"/>
</dbReference>
<dbReference type="Gene3D" id="1.10.10.1600">
    <property type="entry name" value="Bacterial DNA polymerase III alpha subunit, thumb domain"/>
    <property type="match status" value="1"/>
</dbReference>
<dbReference type="Gene3D" id="3.20.20.140">
    <property type="entry name" value="Metal-dependent hydrolases"/>
    <property type="match status" value="1"/>
</dbReference>
<dbReference type="InterPro" id="IPR011708">
    <property type="entry name" value="DNA_pol3_alpha_NTPase_dom"/>
</dbReference>
<dbReference type="InterPro" id="IPR041931">
    <property type="entry name" value="DNA_pol3_alpha_thumb_dom"/>
</dbReference>
<dbReference type="InterPro" id="IPR040982">
    <property type="entry name" value="DNA_pol3_finger"/>
</dbReference>
<dbReference type="InterPro" id="IPR004805">
    <property type="entry name" value="DnaE2/DnaE/PolC"/>
</dbReference>
<dbReference type="InterPro" id="IPR029460">
    <property type="entry name" value="DNAPol_HHH"/>
</dbReference>
<dbReference type="InterPro" id="IPR004365">
    <property type="entry name" value="NA-bd_OB_tRNA"/>
</dbReference>
<dbReference type="InterPro" id="IPR004013">
    <property type="entry name" value="PHP_dom"/>
</dbReference>
<dbReference type="InterPro" id="IPR003141">
    <property type="entry name" value="Pol/His_phosphatase_N"/>
</dbReference>
<dbReference type="InterPro" id="IPR016195">
    <property type="entry name" value="Pol/histidinol_Pase-like"/>
</dbReference>
<dbReference type="NCBIfam" id="TIGR00594">
    <property type="entry name" value="polc"/>
    <property type="match status" value="1"/>
</dbReference>
<dbReference type="PANTHER" id="PTHR32294">
    <property type="entry name" value="DNA POLYMERASE III SUBUNIT ALPHA"/>
    <property type="match status" value="1"/>
</dbReference>
<dbReference type="PANTHER" id="PTHR32294:SF0">
    <property type="entry name" value="DNA POLYMERASE III SUBUNIT ALPHA"/>
    <property type="match status" value="1"/>
</dbReference>
<dbReference type="Pfam" id="PF07733">
    <property type="entry name" value="DNA_pol3_alpha"/>
    <property type="match status" value="1"/>
</dbReference>
<dbReference type="Pfam" id="PF17657">
    <property type="entry name" value="DNA_pol3_finger"/>
    <property type="match status" value="1"/>
</dbReference>
<dbReference type="Pfam" id="PF14579">
    <property type="entry name" value="HHH_6"/>
    <property type="match status" value="1"/>
</dbReference>
<dbReference type="Pfam" id="PF02811">
    <property type="entry name" value="PHP"/>
    <property type="match status" value="1"/>
</dbReference>
<dbReference type="Pfam" id="PF01336">
    <property type="entry name" value="tRNA_anti-codon"/>
    <property type="match status" value="1"/>
</dbReference>
<dbReference type="SMART" id="SM00481">
    <property type="entry name" value="POLIIIAc"/>
    <property type="match status" value="1"/>
</dbReference>
<dbReference type="SUPFAM" id="SSF160975">
    <property type="entry name" value="AF1531-like"/>
    <property type="match status" value="1"/>
</dbReference>
<dbReference type="SUPFAM" id="SSF89550">
    <property type="entry name" value="PHP domain-like"/>
    <property type="match status" value="1"/>
</dbReference>
<name>DPO3A_STAEQ</name>
<keyword id="KW-0963">Cytoplasm</keyword>
<keyword id="KW-0235">DNA replication</keyword>
<keyword id="KW-0239">DNA-directed DNA polymerase</keyword>
<keyword id="KW-0548">Nucleotidyltransferase</keyword>
<keyword id="KW-1185">Reference proteome</keyword>
<keyword id="KW-0808">Transferase</keyword>
<proteinExistence type="inferred from homology"/>
<comment type="function">
    <text evidence="1">DNA polymerase III is a complex, multichain enzyme responsible for most of the replicative synthesis in bacteria. This DNA polymerase also exhibits 3' to 5' exonuclease activity. The alpha chain is the DNA polymerase (By similarity).</text>
</comment>
<comment type="catalytic activity">
    <reaction>
        <text>DNA(n) + a 2'-deoxyribonucleoside 5'-triphosphate = DNA(n+1) + diphosphate</text>
        <dbReference type="Rhea" id="RHEA:22508"/>
        <dbReference type="Rhea" id="RHEA-COMP:17339"/>
        <dbReference type="Rhea" id="RHEA-COMP:17340"/>
        <dbReference type="ChEBI" id="CHEBI:33019"/>
        <dbReference type="ChEBI" id="CHEBI:61560"/>
        <dbReference type="ChEBI" id="CHEBI:173112"/>
        <dbReference type="EC" id="2.7.7.7"/>
    </reaction>
</comment>
<comment type="subunit">
    <text evidence="1">DNA polymerase III contains a core (composed of alpha, epsilon and theta chains) that associates with a tau subunit. This core dimerizes to form the PolIII' complex. PolIII' associates with the gamma complex (composed of gamma, delta, delta', psi and chi chains) and with the beta chain to form the complete DNA polymerase III complex (By similarity).</text>
</comment>
<comment type="subcellular location">
    <subcellularLocation>
        <location evidence="1">Cytoplasm</location>
    </subcellularLocation>
</comment>
<comment type="similarity">
    <text evidence="2">Belongs to the DNA polymerase type-C family. DnaE subfamily.</text>
</comment>
<accession>Q5HNK2</accession>
<sequence length="1065" mass="123361">MVAHLNIHTSFDLLDSSLRIDALIDKAKKEGYRALAITDTNVLYGYPKFYDACIAAHIHPIFGMTIYLTDGLYTIETVVLAKNNQGLKSLYQLSSAIMMRNKEEVPIEWLKRYDEHLIIIFKEAELSHKQVIDAFEGKKELYLNHNSNNTLTGKRVWMQSARYLNEDDAETIPALHAIRDNTKLDLIHEKETLDEHFPSIEELQTLNLSEDMITNANEIEELCQAEIAYHQSLLPQFVTPNGETSKDYLWTILIHRLREWELNDKTYFNRLKHEYKIITDMGFEDYFLIVSDLIHFAKTHEVMVGPGRGSSAGSLVSYLLGITTIDPLKYNLLFERFLNPERVTMPDIDIDFEDTRREKVIKYVQDKYGEHHVSGIVTFGHLLARAVARDVGRIMGFDETSLNEISKLIPHKLGITLEEAYQKPEFKAFVHRNHRNERWFEVSKKLEGLPRHTSTHAAGIIINDQPLFKFAPLTTGDTGLLTQWTMTEAERIGLLKIDFLGLRNLSIIHQIILQVKKDLNINIDIEAIPYDDKKVFDLLSNGDTTGIFQLESDGVRSVLKRLQPEHFEDIVAVTSLYRPGPMEEISTYITRRHNPNQVAYLHPDLEPILKNTYGVIIYQEQIMLIASQVAGFSYGEADILRRAMSKKNRAILESERQHFIDGAKNNGYDEQISKQIFDLILKFADYGFPRAHAVSYSKIAYIMSYLKVHYPHYFYANILSNVIGSEKKTAAMIDEAKHQRISILPPNINQSHWYYKASNKGIYLSLGTIKGIGYQSVKLIIDERQQNGPYRDFFDFSRRIPKRVKNRKLLESLILVGAFDTFGKTRATLLQAIDQVLDLNSDVEQDEMLFDLLTPKQSYEEKEELPDQLLSDYEKEYLGFYISKHPVEKKFEKKQYLGIFQLSNGSHYQPILVQFDHIKQIRTKNGQNMAFVTMNDGRTMMDGVIFPDKFKKYETSISKEQMYIVLGKFEKRNQQMQLIINQLFEVEAYEQTKLSNSKKVILRNVTHLEPQFEHSKVESNEQHALNIYGFDESANKMTMLGQIERQRQNFDLLIQTYSPADIRFI</sequence>
<evidence type="ECO:0000250" key="1"/>
<evidence type="ECO:0000305" key="2"/>
<gene>
    <name type="primary">dnaE</name>
    <name type="ordered locus">SERP1266</name>
</gene>
<organism>
    <name type="scientific">Staphylococcus epidermidis (strain ATCC 35984 / DSM 28319 / BCRC 17069 / CCUG 31568 / BM 3577 / RP62A)</name>
    <dbReference type="NCBI Taxonomy" id="176279"/>
    <lineage>
        <taxon>Bacteria</taxon>
        <taxon>Bacillati</taxon>
        <taxon>Bacillota</taxon>
        <taxon>Bacilli</taxon>
        <taxon>Bacillales</taxon>
        <taxon>Staphylococcaceae</taxon>
        <taxon>Staphylococcus</taxon>
    </lineage>
</organism>
<reference key="1">
    <citation type="journal article" date="2005" name="J. Bacteriol.">
        <title>Insights on evolution of virulence and resistance from the complete genome analysis of an early methicillin-resistant Staphylococcus aureus strain and a biofilm-producing methicillin-resistant Staphylococcus epidermidis strain.</title>
        <authorList>
            <person name="Gill S.R."/>
            <person name="Fouts D.E."/>
            <person name="Archer G.L."/>
            <person name="Mongodin E.F."/>
            <person name="DeBoy R.T."/>
            <person name="Ravel J."/>
            <person name="Paulsen I.T."/>
            <person name="Kolonay J.F."/>
            <person name="Brinkac L.M."/>
            <person name="Beanan M.J."/>
            <person name="Dodson R.J."/>
            <person name="Daugherty S.C."/>
            <person name="Madupu R."/>
            <person name="Angiuoli S.V."/>
            <person name="Durkin A.S."/>
            <person name="Haft D.H."/>
            <person name="Vamathevan J.J."/>
            <person name="Khouri H."/>
            <person name="Utterback T.R."/>
            <person name="Lee C."/>
            <person name="Dimitrov G."/>
            <person name="Jiang L."/>
            <person name="Qin H."/>
            <person name="Weidman J."/>
            <person name="Tran K."/>
            <person name="Kang K.H."/>
            <person name="Hance I.R."/>
            <person name="Nelson K.E."/>
            <person name="Fraser C.M."/>
        </authorList>
    </citation>
    <scope>NUCLEOTIDE SEQUENCE [LARGE SCALE GENOMIC DNA]</scope>
    <source>
        <strain>ATCC 35984 / DSM 28319 / BCRC 17069 / CCUG 31568 / BM 3577 / RP62A</strain>
    </source>
</reference>